<name>VP4_ROTPC</name>
<proteinExistence type="inferred from homology"/>
<reference key="1">
    <citation type="journal article" date="1992" name="Virology">
        <title>Sequences of the four larger proteins of a porcine group C rotavirus and comparison with the equivalent group A rotavirus proteins.</title>
        <authorList>
            <person name="Bremont M."/>
            <person name="Juste-Lesage P."/>
            <person name="Chabanne-Vautherot D."/>
            <person name="Charpilienne A."/>
            <person name="Cohen J."/>
        </authorList>
    </citation>
    <scope>NUCLEOTIDE SEQUENCE [GENOMIC DNA]</scope>
</reference>
<evidence type="ECO:0000255" key="1">
    <source>
        <dbReference type="HAMAP-Rule" id="MF_04125"/>
    </source>
</evidence>
<organism>
    <name type="scientific">Rotavirus C (strain RVC/Pig/United States/Cowden/1980)</name>
    <name type="common">RV-C</name>
    <dbReference type="NCBI Taxonomy" id="10916"/>
    <lineage>
        <taxon>Viruses</taxon>
        <taxon>Riboviria</taxon>
        <taxon>Orthornavirae</taxon>
        <taxon>Duplornaviricota</taxon>
        <taxon>Resentoviricetes</taxon>
        <taxon>Reovirales</taxon>
        <taxon>Sedoreoviridae</taxon>
        <taxon>Rotavirus</taxon>
        <taxon>Rotavirus C</taxon>
    </lineage>
</organism>
<feature type="chain" id="PRO_0000041099" description="Outer capsid protein VP4" evidence="1">
    <location>
        <begin position="1"/>
        <end position="736"/>
    </location>
</feature>
<feature type="chain" id="PRO_0000041100" description="Outer capsid protein VP8*" evidence="1">
    <location>
        <begin position="1"/>
        <end position="231"/>
    </location>
</feature>
<feature type="chain" id="PRO_0000041101" description="Outer capsid protein VP5*" evidence="1">
    <location>
        <begin position="248"/>
        <end position="736"/>
    </location>
</feature>
<feature type="coiled-coil region" evidence="1">
    <location>
        <begin position="495"/>
        <end position="515"/>
    </location>
</feature>
<feature type="site" description="Cleavage" evidence="1">
    <location>
        <begin position="231"/>
        <end position="232"/>
    </location>
</feature>
<feature type="site" description="Cleavage" evidence="1">
    <location>
        <begin position="247"/>
        <end position="248"/>
    </location>
</feature>
<protein>
    <recommendedName>
        <fullName evidence="1">Outer capsid protein VP4</fullName>
    </recommendedName>
    <alternativeName>
        <fullName evidence="1">Hemagglutinin</fullName>
    </alternativeName>
    <component>
        <recommendedName>
            <fullName evidence="1">Outer capsid protein VP8*</fullName>
        </recommendedName>
    </component>
    <component>
        <recommendedName>
            <fullName evidence="1">Outer capsid protein VP5*</fullName>
        </recommendedName>
    </component>
</protein>
<organismHost>
    <name type="scientific">Sus scrofa</name>
    <name type="common">Pig</name>
    <dbReference type="NCBI Taxonomy" id="9823"/>
</organismHost>
<keyword id="KW-0167">Capsid protein</keyword>
<keyword id="KW-0175">Coiled coil</keyword>
<keyword id="KW-0348">Hemagglutinin</keyword>
<keyword id="KW-1032">Host cell membrane</keyword>
<keyword id="KW-1038">Host endoplasmic reticulum</keyword>
<keyword id="KW-1043">Host membrane</keyword>
<keyword id="KW-0945">Host-virus interaction</keyword>
<keyword id="KW-0472">Membrane</keyword>
<keyword id="KW-1152">Outer capsid protein</keyword>
<keyword id="KW-1161">Viral attachment to host cell</keyword>
<keyword id="KW-1162">Viral penetration into host cytoplasm</keyword>
<keyword id="KW-1173">Viral penetration via permeabilization of host membrane</keyword>
<keyword id="KW-0946">Virion</keyword>
<keyword id="KW-1160">Virus entry into host cell</keyword>
<comment type="function">
    <molecule>Outer capsid protein VP4</molecule>
    <text evidence="1">Spike-forming protein that mediates virion attachment to the host epithelial cell receptors and plays a major role in cell penetration, determination of host range restriction and virulence. Rotavirus attachment and entry into the host cell probably involves multiple sequential contacts between the outer capsid proteins VP4 and VP7, and the cell receptors. It is subsequently lost, together with VP7, following virus entry into the host cell. Following entry into the host cell, low intracellular or intravesicular Ca(2+) concentration probably causes the calcium-stabilized VP7 trimers to dissociate from the virion. This step is probably necessary for the membrane-disrupting entry step and the release of VP4, which is locked onto the virion by VP7.</text>
</comment>
<comment type="function">
    <molecule>Outer capsid protein VP5*</molecule>
    <text evidence="1">Forms the spike 'foot' and 'body' and acts as a membrane permeabilization protein that mediates release of viral particles from endosomal compartments into the cytoplasm. During entry, the part of VP5* that protrudes from the virus folds back on itself and reorganizes from a local dimer to a trimer. This reorganization may be linked to membrane penetration.</text>
</comment>
<comment type="function">
    <molecule>Outer capsid protein VP8*</molecule>
    <text evidence="1">Forms the head of the spikes and mediates the recognition of specific host cell surface glycans. It is the viral hemagglutinin and an important target of neutralizing antibodies.</text>
</comment>
<comment type="subunit">
    <molecule>Outer capsid protein VP4</molecule>
    <text evidence="1">Homotrimer. VP4 adopts a dimeric appearance above the capsid surface, while forming a trimeric base anchored inside the capsid layer. Only hints of the third molecule are observed above the capsid surface. It probably performs a series of molecular rearrangements during viral entry. Prior to trypsin cleavage, it is flexible. The priming trypsin cleavage triggers its rearrangement into rigid spikes with approximate two-fold symmetry of their protruding parts. After an unknown second triggering event, cleaved VP4 may undergo another rearrangement, in which two VP5* subunits fold back on themselves and join a third subunit to form a tightly associated trimer, shaped like a folded umbrella. Interacts with VP6. Interacts with VP7.</text>
</comment>
<comment type="subunit">
    <molecule>Outer capsid protein VP5*</molecule>
    <text evidence="1">Homotrimer. The trimer is coiled-coil stabilized by its C-terminus, however, its N-terminus, known as antigen domain or 'body', seems to be flexible allowing it to self-associate either as a dimer or a trimer.</text>
</comment>
<comment type="subcellular location">
    <molecule>Outer capsid protein VP4</molecule>
    <subcellularLocation>
        <location evidence="1">Virion</location>
    </subcellularLocation>
    <subcellularLocation>
        <location evidence="1">Host rough endoplasmic reticulum</location>
    </subcellularLocation>
    <subcellularLocation>
        <location evidence="1">Host cell membrane</location>
    </subcellularLocation>
    <subcellularLocation>
        <location evidence="1">Host endoplasmic reticulum-Golgi intermediate compartment</location>
    </subcellularLocation>
    <text evidence="1">The outer layer contains 180 copies of VP4, grouped as 60 dimers. Immature double-layered particles assembled in the cytoplasm bud across the membrane of the endoplasmic reticulum, acquiring during this process a transient lipid membrane that is modified with the ER resident viral glycoproteins NSP4 and VP7; these enveloped particles also contain VP4. As the particles move towards the interior of the ER cisternae, the transient lipid membrane and the non-structural protein NSP4 are lost, while the virus surface proteins VP4 and VP7 rearrange to form the outermost virus protein layer, yielding mature infectious triple-layered particles.</text>
</comment>
<comment type="subcellular location">
    <molecule>Outer capsid protein VP8*</molecule>
    <subcellularLocation>
        <location evidence="1">Virion</location>
    </subcellularLocation>
    <text evidence="1">Outer capsid protein.</text>
</comment>
<comment type="subcellular location">
    <molecule>Outer capsid protein VP5*</molecule>
    <subcellularLocation>
        <location evidence="1">Virion</location>
    </subcellularLocation>
    <text evidence="1">Outer capsid protein.</text>
</comment>
<comment type="domain">
    <molecule>Outer capsid protein VP4</molecule>
    <text evidence="1">The VP4 spike is divided into a foot, a stalk and body, and a head.</text>
</comment>
<comment type="PTM">
    <molecule>Outer capsid protein VP4</molecule>
    <text evidence="1">Proteolytic cleavage by trypsin results in activation of VP4 functions and greatly increases infectivity. The penetration into the host cell is dependent on trypsin treatment of VP4. It produces two peptides, VP5* and VP8* that remain associated with the virion. Cleavage of VP4 by trypsin probably occurs in vivo in the lumen of the intestine prior to infection of enterocytes. Trypsin seems to be incorporated into the three-layered viral particles but remains inactive as long as the viral outer capsid is intact and would only be activated upon the solubilization of the latter.</text>
</comment>
<comment type="similarity">
    <text evidence="1">Belongs to the rotavirus VP4 family.</text>
</comment>
<accession>P26193</accession>
<dbReference type="EMBL" id="M74218">
    <property type="protein sequence ID" value="AAB00802.1"/>
    <property type="molecule type" value="Genomic_DNA"/>
</dbReference>
<dbReference type="PIR" id="D40822">
    <property type="entry name" value="VPXRPC"/>
</dbReference>
<dbReference type="SMR" id="P26193"/>
<dbReference type="Proteomes" id="UP000008175">
    <property type="component" value="Genome"/>
</dbReference>
<dbReference type="GO" id="GO:0044172">
    <property type="term" value="C:host cell endoplasmic reticulum-Golgi intermediate compartment"/>
    <property type="evidence" value="ECO:0007669"/>
    <property type="project" value="UniProtKB-SubCell"/>
</dbReference>
<dbReference type="GO" id="GO:0020002">
    <property type="term" value="C:host cell plasma membrane"/>
    <property type="evidence" value="ECO:0007669"/>
    <property type="project" value="UniProtKB-SubCell"/>
</dbReference>
<dbReference type="GO" id="GO:0044168">
    <property type="term" value="C:host cell rough endoplasmic reticulum"/>
    <property type="evidence" value="ECO:0007669"/>
    <property type="project" value="UniProtKB-SubCell"/>
</dbReference>
<dbReference type="GO" id="GO:0016020">
    <property type="term" value="C:membrane"/>
    <property type="evidence" value="ECO:0007669"/>
    <property type="project" value="UniProtKB-KW"/>
</dbReference>
<dbReference type="GO" id="GO:0039624">
    <property type="term" value="C:viral outer capsid"/>
    <property type="evidence" value="ECO:0007669"/>
    <property type="project" value="UniProtKB-UniRule"/>
</dbReference>
<dbReference type="GO" id="GO:0039665">
    <property type="term" value="P:permeabilization of host organelle membrane involved in viral entry into host cell"/>
    <property type="evidence" value="ECO:0007669"/>
    <property type="project" value="UniProtKB-UniRule"/>
</dbReference>
<dbReference type="GO" id="GO:0019062">
    <property type="term" value="P:virion attachment to host cell"/>
    <property type="evidence" value="ECO:0007669"/>
    <property type="project" value="UniProtKB-UniRule"/>
</dbReference>
<dbReference type="Gene3D" id="1.20.5.170">
    <property type="match status" value="1"/>
</dbReference>
<dbReference type="HAMAP" id="MF_04125">
    <property type="entry name" value="Rota_VP4"/>
    <property type="match status" value="1"/>
</dbReference>
<dbReference type="InterPro" id="IPR042546">
    <property type="entry name" value="Rota_A_VP4"/>
</dbReference>
<dbReference type="InterPro" id="IPR035330">
    <property type="entry name" value="Rota_VP4_MID"/>
</dbReference>
<dbReference type="InterPro" id="IPR038017">
    <property type="entry name" value="Rota_VP4_MID_sf"/>
</dbReference>
<dbReference type="InterPro" id="IPR035329">
    <property type="entry name" value="VP4_helical"/>
</dbReference>
<dbReference type="Pfam" id="PF17477">
    <property type="entry name" value="Rota_VP4_MID"/>
    <property type="match status" value="1"/>
</dbReference>
<dbReference type="Pfam" id="PF17478">
    <property type="entry name" value="VP4_helical"/>
    <property type="match status" value="1"/>
</dbReference>
<dbReference type="SUPFAM" id="SSF111379">
    <property type="entry name" value="VP4 membrane interaction domain"/>
    <property type="match status" value="1"/>
</dbReference>
<sequence length="736" mass="83232">MASSLYQQLISQNYYSIGNEILTDQQTTETVVDYVDAGNYTYAQLPPTKWGARGTFKSAFNVSNITGPHTNTIIEWSNLLNSNGWVIYQKPANTTKLFKHGPETYNSNLAAFELWYGKAGTSVTSDYYSSLQNNEKTVTATSDSLILFWNEGSTVLANKKVNFSWDMGGMLIKPTRGNRVDICMANMNDFNSSIFNWEEWKHEFPRSDVNINVNMYTDYYLASEDPYTELKALQQPNITTFEMKMMKIIRNGSINLNEVVSKDSLWQEVRYARDITLECKIESEVVKGGGWGYDYTSVAFKTVNHTYTYTRAGEIVNAHVTISFNNMKERSYGGSLPTDFKIGRFDVIDTDTYMYIDYWDDSEIFKNMVYVRDLSANIGGFFYYAEMSYYFQIPVGAHPGLHSSGVRFVYERCLLSQQFTDQVALNSMRFIFRVTESNGWFMTSGNINTRRIASGTGFAYADGHTSQTVGNITFISLIPSNPNYQTPIASSSTVRMDLERKINDLRNDFNQLANSVALGDILSLATSPLTFANLLESVPAIASSVKDVAANVMKKFRNTKMFKKATKAKYSEFIIGDLLEDVTNVARNSNGMNFDDITSAVMVSTTNKLQLTDVDTLSEIVARSADNFIPNRSYRMIEDGIVYEATPKRTFSYDLTTLQQREFDIDKFMRLASKSPVISAIVDFATLKAMRETYGVGTDVIYKLVASDAPTILSFIDNNNPLIKSRIEELLRQCRL</sequence>